<sequence>MEDVEARFAHLLLPIRDLTRNWEVDVAAQLGEYLEELDQICISFDKGKTTMNFIEAALLIQGSACVYSKKVEYLYSLVYQALDFISGKKQAKQLSSTPEDGTIGDASSRAPQEAEQKFRALDDLSDSCANVDLRDDQVVSGTLIPLLPNALVAPDEMEKNSNPLYSCQGEVLASRKDFRVNTCTPHPRGTFLLEPLGVSLMEALQPWNPKEPGRAEEQPMEVSVCGSPGPALSTSQEPGSSPEGPVPRGGGVGEDEEDAEGAAEPPEASAPEVPMEPPEPRSPEQSVAQPRRYTLRERKEAPEPASRLKDTPDPWQGLDPFDSPDSKPFRKGRPYSVPPRVEEAPGQKRKRKGAVKLQDFHQWYLAAYADHTDSRRSRRKGPSFADMEVLYWKHVKEQLETLRKMQRREAAERWLPRAEQGLWPVEEDRLEDSVEDLGAADDFLEPEEYAEPEGAEPGEDADMEAEAMPASLRYEELVQRNVELFVTASKQDVFVTTSRQELVQETELKQHIRGWEDAIQSLLQEQEEHVPFDIHTYGDQVVSRFSQLNQWCPFAKLVAGQPAFEVCRSMLASLQLANDYTVEITQQPGLEAAVDTMSLRLLTHQRARQRFQTYAAPSTVQP</sequence>
<evidence type="ECO:0000250" key="1"/>
<evidence type="ECO:0000250" key="2">
    <source>
        <dbReference type="UniProtKB" id="Q4V8I2"/>
    </source>
</evidence>
<evidence type="ECO:0000250" key="3">
    <source>
        <dbReference type="UniProtKB" id="Q6IBW4"/>
    </source>
</evidence>
<evidence type="ECO:0000250" key="4">
    <source>
        <dbReference type="UniProtKB" id="Q8BSP2"/>
    </source>
</evidence>
<evidence type="ECO:0000256" key="5">
    <source>
        <dbReference type="SAM" id="MobiDB-lite"/>
    </source>
</evidence>
<evidence type="ECO:0000305" key="6"/>
<dbReference type="EMBL" id="BC102795">
    <property type="protein sequence ID" value="AAI02796.1"/>
    <property type="molecule type" value="mRNA"/>
</dbReference>
<dbReference type="RefSeq" id="NP_001070511.1">
    <property type="nucleotide sequence ID" value="NM_001077043.1"/>
</dbReference>
<dbReference type="FunCoup" id="Q3SZL8">
    <property type="interactions" value="3652"/>
</dbReference>
<dbReference type="STRING" id="9913.ENSBTAP00000016741"/>
<dbReference type="iPTMnet" id="Q3SZL8"/>
<dbReference type="PaxDb" id="9913-ENSBTAP00000016741"/>
<dbReference type="Ensembl" id="ENSBTAT00000016741.6">
    <property type="protein sequence ID" value="ENSBTAP00000016741.5"/>
    <property type="gene ID" value="ENSBTAG00000012607.7"/>
</dbReference>
<dbReference type="GeneID" id="767978"/>
<dbReference type="KEGG" id="bta:767978"/>
<dbReference type="CTD" id="29781"/>
<dbReference type="VEuPathDB" id="HostDB:ENSBTAG00000012607"/>
<dbReference type="VGNC" id="VGNC:31906">
    <property type="gene designation" value="NCAPH2"/>
</dbReference>
<dbReference type="eggNOG" id="KOG2359">
    <property type="taxonomic scope" value="Eukaryota"/>
</dbReference>
<dbReference type="GeneTree" id="ENSGT00390000014443"/>
<dbReference type="InParanoid" id="Q3SZL8"/>
<dbReference type="OMA" id="FDPPEHK"/>
<dbReference type="OrthoDB" id="10038475at2759"/>
<dbReference type="Reactome" id="R-BTA-2299718">
    <property type="pathway name" value="Condensation of Prophase Chromosomes"/>
</dbReference>
<dbReference type="Proteomes" id="UP000009136">
    <property type="component" value="Chromosome 5"/>
</dbReference>
<dbReference type="Bgee" id="ENSBTAG00000012607">
    <property type="expression patterns" value="Expressed in retina and 109 other cell types or tissues"/>
</dbReference>
<dbReference type="GO" id="GO:0030054">
    <property type="term" value="C:cell junction"/>
    <property type="evidence" value="ECO:0007669"/>
    <property type="project" value="Ensembl"/>
</dbReference>
<dbReference type="GO" id="GO:0000794">
    <property type="term" value="C:condensed nuclear chromosome"/>
    <property type="evidence" value="ECO:0007669"/>
    <property type="project" value="Ensembl"/>
</dbReference>
<dbReference type="GO" id="GO:0000796">
    <property type="term" value="C:condensin complex"/>
    <property type="evidence" value="ECO:0000318"/>
    <property type="project" value="GO_Central"/>
</dbReference>
<dbReference type="GO" id="GO:0045171">
    <property type="term" value="C:intercellular bridge"/>
    <property type="evidence" value="ECO:0007669"/>
    <property type="project" value="Ensembl"/>
</dbReference>
<dbReference type="GO" id="GO:0005654">
    <property type="term" value="C:nucleoplasm"/>
    <property type="evidence" value="ECO:0007669"/>
    <property type="project" value="Ensembl"/>
</dbReference>
<dbReference type="GO" id="GO:0005634">
    <property type="term" value="C:nucleus"/>
    <property type="evidence" value="ECO:0000318"/>
    <property type="project" value="GO_Central"/>
</dbReference>
<dbReference type="GO" id="GO:0003682">
    <property type="term" value="F:chromatin binding"/>
    <property type="evidence" value="ECO:0000318"/>
    <property type="project" value="GO_Central"/>
</dbReference>
<dbReference type="GO" id="GO:0051309">
    <property type="term" value="P:female meiosis chromosome separation"/>
    <property type="evidence" value="ECO:0007669"/>
    <property type="project" value="Ensembl"/>
</dbReference>
<dbReference type="GO" id="GO:0010032">
    <property type="term" value="P:meiotic chromosome condensation"/>
    <property type="evidence" value="ECO:0000318"/>
    <property type="project" value="GO_Central"/>
</dbReference>
<dbReference type="GO" id="GO:0007076">
    <property type="term" value="P:mitotic chromosome condensation"/>
    <property type="evidence" value="ECO:0000250"/>
    <property type="project" value="UniProtKB"/>
</dbReference>
<dbReference type="GO" id="GO:0051306">
    <property type="term" value="P:mitotic sister chromatid separation"/>
    <property type="evidence" value="ECO:0000318"/>
    <property type="project" value="GO_Central"/>
</dbReference>
<dbReference type="GO" id="GO:0051984">
    <property type="term" value="P:positive regulation of chromosome segregation"/>
    <property type="evidence" value="ECO:0007669"/>
    <property type="project" value="Ensembl"/>
</dbReference>
<dbReference type="GO" id="GO:1905820">
    <property type="term" value="P:positive regulation of chromosome separation"/>
    <property type="evidence" value="ECO:0007669"/>
    <property type="project" value="Ensembl"/>
</dbReference>
<dbReference type="GO" id="GO:0033077">
    <property type="term" value="P:T cell differentiation in thymus"/>
    <property type="evidence" value="ECO:0007669"/>
    <property type="project" value="Ensembl"/>
</dbReference>
<dbReference type="InterPro" id="IPR031737">
    <property type="entry name" value="CNDH2_C"/>
</dbReference>
<dbReference type="InterPro" id="IPR031719">
    <property type="entry name" value="H2_M"/>
</dbReference>
<dbReference type="InterPro" id="IPR009378">
    <property type="entry name" value="H2_N"/>
</dbReference>
<dbReference type="InterPro" id="IPR031739">
    <property type="entry name" value="Ncaph2"/>
</dbReference>
<dbReference type="PANTHER" id="PTHR14324">
    <property type="entry name" value="CONDENSIN-2 COMPLEX SUBUNIT H2"/>
    <property type="match status" value="1"/>
</dbReference>
<dbReference type="PANTHER" id="PTHR14324:SF3">
    <property type="entry name" value="CONDENSIN-2 COMPLEX SUBUNIT H2"/>
    <property type="match status" value="1"/>
</dbReference>
<dbReference type="Pfam" id="PF16858">
    <property type="entry name" value="CNDH2_C"/>
    <property type="match status" value="1"/>
</dbReference>
<dbReference type="Pfam" id="PF16869">
    <property type="entry name" value="CNDH2_M"/>
    <property type="match status" value="1"/>
</dbReference>
<dbReference type="Pfam" id="PF06278">
    <property type="entry name" value="CNDH2_N"/>
    <property type="match status" value="1"/>
</dbReference>
<reference key="1">
    <citation type="submission" date="2005-08" db="EMBL/GenBank/DDBJ databases">
        <authorList>
            <consortium name="NIH - Mammalian Gene Collection (MGC) project"/>
        </authorList>
    </citation>
    <scope>NUCLEOTIDE SEQUENCE [LARGE SCALE MRNA]</scope>
    <source>
        <strain>Crossbred X Angus</strain>
        <tissue>Ileum</tissue>
    </source>
</reference>
<organism>
    <name type="scientific">Bos taurus</name>
    <name type="common">Bovine</name>
    <dbReference type="NCBI Taxonomy" id="9913"/>
    <lineage>
        <taxon>Eukaryota</taxon>
        <taxon>Metazoa</taxon>
        <taxon>Chordata</taxon>
        <taxon>Craniata</taxon>
        <taxon>Vertebrata</taxon>
        <taxon>Euteleostomi</taxon>
        <taxon>Mammalia</taxon>
        <taxon>Eutheria</taxon>
        <taxon>Laurasiatheria</taxon>
        <taxon>Artiodactyla</taxon>
        <taxon>Ruminantia</taxon>
        <taxon>Pecora</taxon>
        <taxon>Bovidae</taxon>
        <taxon>Bovinae</taxon>
        <taxon>Bos</taxon>
    </lineage>
</organism>
<keyword id="KW-0226">DNA condensation</keyword>
<keyword id="KW-0539">Nucleus</keyword>
<keyword id="KW-0597">Phosphoprotein</keyword>
<keyword id="KW-1185">Reference proteome</keyword>
<comment type="function">
    <text evidence="3 4">Regulatory subunit of the condensin-2 complex, a complex that seems to provide chromosomes with an additional level of organization and rigidity and in establishing mitotic chromosome architecture (By similarity). May promote the resolution of double-strand DNA catenanes (intertwines) between sister chromatids. Condensin-mediated compaction likely increases tension in catenated sister chromatids, providing directionality for type II topoisomerase-mediated strand exchanges toward chromatid decatenation. Required for decatenation of chromatin bridges at anaphase. Early in neurogenesis, may play an essential role to ensure accurate mitotic chromosome condensation in neuron stem cells, ultimately affecting neuron pool and cortex size (By similarity). Seems to have lineage-specific role in T-cell development (By similarity).</text>
</comment>
<comment type="subunit">
    <text evidence="1">Component of the condensin-2 complex, which contains the SMC2 and SMC4 heterodimer, and three non SMC subunits, NCAPG2, NCAPH2 and NCAPD3 that probably regulate the complex.</text>
</comment>
<comment type="subcellular location">
    <subcellularLocation>
        <location evidence="1">Nucleus</location>
    </subcellularLocation>
</comment>
<comment type="similarity">
    <text evidence="6">Belongs to the CND2 H2 (condensin-2 subunit 2) family.</text>
</comment>
<name>CNDH2_BOVIN</name>
<protein>
    <recommendedName>
        <fullName>Condensin-2 complex subunit H2</fullName>
    </recommendedName>
    <alternativeName>
        <fullName>Non-SMC condensin II complex subunit H2</fullName>
    </alternativeName>
</protein>
<feature type="chain" id="PRO_0000326240" description="Condensin-2 complex subunit H2">
    <location>
        <begin position="1"/>
        <end position="622"/>
    </location>
</feature>
<feature type="region of interest" description="Disordered" evidence="5">
    <location>
        <begin position="207"/>
        <end position="354"/>
    </location>
</feature>
<feature type="compositionally biased region" description="Low complexity" evidence="5">
    <location>
        <begin position="262"/>
        <end position="273"/>
    </location>
</feature>
<feature type="compositionally biased region" description="Basic and acidic residues" evidence="5">
    <location>
        <begin position="294"/>
        <end position="312"/>
    </location>
</feature>
<feature type="modified residue" description="Phosphothreonine" evidence="3">
    <location>
        <position position="19"/>
    </location>
</feature>
<feature type="modified residue" description="Phosphoserine" evidence="3">
    <location>
        <position position="95"/>
    </location>
</feature>
<feature type="modified residue" description="Phosphoserine" evidence="3">
    <location>
        <position position="199"/>
    </location>
</feature>
<feature type="modified residue" description="Phosphoserine" evidence="2">
    <location>
        <position position="223"/>
    </location>
</feature>
<feature type="modified residue" description="Phosphoserine" evidence="4">
    <location>
        <position position="227"/>
    </location>
</feature>
<feature type="modified residue" description="Phosphoserine" evidence="3">
    <location>
        <position position="282"/>
    </location>
</feature>
<proteinExistence type="evidence at transcript level"/>
<gene>
    <name type="primary">NCAPH2</name>
</gene>
<accession>Q3SZL8</accession>